<feature type="chain" id="PRO_0000054405" description="Uncharacterized HTH-type transcriptional regulator YxaD">
    <location>
        <begin position="1"/>
        <end position="143"/>
    </location>
</feature>
<feature type="domain" description="HTH marR-type" evidence="1">
    <location>
        <begin position="11"/>
        <end position="139"/>
    </location>
</feature>
<feature type="DNA-binding region" description="H-T-H motif" evidence="1">
    <location>
        <begin position="53"/>
        <end position="76"/>
    </location>
</feature>
<accession>P42103</accession>
<proteinExistence type="predicted"/>
<organism>
    <name type="scientific">Bacillus subtilis (strain 168)</name>
    <dbReference type="NCBI Taxonomy" id="224308"/>
    <lineage>
        <taxon>Bacteria</taxon>
        <taxon>Bacillati</taxon>
        <taxon>Bacillota</taxon>
        <taxon>Bacilli</taxon>
        <taxon>Bacillales</taxon>
        <taxon>Bacillaceae</taxon>
        <taxon>Bacillus</taxon>
    </lineage>
</organism>
<gene>
    <name type="primary">yxaD</name>
    <name type="ordered locus">BSU40010</name>
    <name type="ORF">S14D</name>
</gene>
<dbReference type="EMBL" id="AB005554">
    <property type="protein sequence ID" value="BAA21583.1"/>
    <property type="molecule type" value="Genomic_DNA"/>
</dbReference>
<dbReference type="EMBL" id="AL009126">
    <property type="protein sequence ID" value="CAB16038.1"/>
    <property type="molecule type" value="Genomic_DNA"/>
</dbReference>
<dbReference type="PIR" id="D70071">
    <property type="entry name" value="D70071"/>
</dbReference>
<dbReference type="RefSeq" id="NP_391881.1">
    <property type="nucleotide sequence ID" value="NC_000964.3"/>
</dbReference>
<dbReference type="RefSeq" id="WP_003243994.1">
    <property type="nucleotide sequence ID" value="NZ_OZ025638.1"/>
</dbReference>
<dbReference type="SMR" id="P42103"/>
<dbReference type="FunCoup" id="P42103">
    <property type="interactions" value="52"/>
</dbReference>
<dbReference type="IntAct" id="P42103">
    <property type="interactions" value="3"/>
</dbReference>
<dbReference type="STRING" id="224308.BSU40010"/>
<dbReference type="PaxDb" id="224308-BSU40010"/>
<dbReference type="EnsemblBacteria" id="CAB16038">
    <property type="protein sequence ID" value="CAB16038"/>
    <property type="gene ID" value="BSU_40010"/>
</dbReference>
<dbReference type="GeneID" id="937699"/>
<dbReference type="KEGG" id="bsu:BSU40010"/>
<dbReference type="PATRIC" id="fig|224308.179.peg.4327"/>
<dbReference type="eggNOG" id="COG1846">
    <property type="taxonomic scope" value="Bacteria"/>
</dbReference>
<dbReference type="InParanoid" id="P42103"/>
<dbReference type="OrthoDB" id="2389730at2"/>
<dbReference type="PhylomeDB" id="P42103"/>
<dbReference type="BioCyc" id="BSUB:BSU40010-MONOMER"/>
<dbReference type="Proteomes" id="UP000001570">
    <property type="component" value="Chromosome"/>
</dbReference>
<dbReference type="GO" id="GO:0003677">
    <property type="term" value="F:DNA binding"/>
    <property type="evidence" value="ECO:0007669"/>
    <property type="project" value="UniProtKB-KW"/>
</dbReference>
<dbReference type="GO" id="GO:0003700">
    <property type="term" value="F:DNA-binding transcription factor activity"/>
    <property type="evidence" value="ECO:0007669"/>
    <property type="project" value="InterPro"/>
</dbReference>
<dbReference type="GO" id="GO:0006355">
    <property type="term" value="P:regulation of DNA-templated transcription"/>
    <property type="evidence" value="ECO:0000318"/>
    <property type="project" value="GO_Central"/>
</dbReference>
<dbReference type="GO" id="GO:0006950">
    <property type="term" value="P:response to stress"/>
    <property type="evidence" value="ECO:0000318"/>
    <property type="project" value="GO_Central"/>
</dbReference>
<dbReference type="Gene3D" id="1.10.10.10">
    <property type="entry name" value="Winged helix-like DNA-binding domain superfamily/Winged helix DNA-binding domain"/>
    <property type="match status" value="1"/>
</dbReference>
<dbReference type="InterPro" id="IPR000835">
    <property type="entry name" value="HTH_MarR-typ"/>
</dbReference>
<dbReference type="InterPro" id="IPR039422">
    <property type="entry name" value="MarR/SlyA-like"/>
</dbReference>
<dbReference type="InterPro" id="IPR023187">
    <property type="entry name" value="Tscrpt_reg_MarR-type_CS"/>
</dbReference>
<dbReference type="InterPro" id="IPR036388">
    <property type="entry name" value="WH-like_DNA-bd_sf"/>
</dbReference>
<dbReference type="InterPro" id="IPR036390">
    <property type="entry name" value="WH_DNA-bd_sf"/>
</dbReference>
<dbReference type="PANTHER" id="PTHR33164:SF57">
    <property type="entry name" value="MARR-FAMILY TRANSCRIPTIONAL REGULATOR"/>
    <property type="match status" value="1"/>
</dbReference>
<dbReference type="PANTHER" id="PTHR33164">
    <property type="entry name" value="TRANSCRIPTIONAL REGULATOR, MARR FAMILY"/>
    <property type="match status" value="1"/>
</dbReference>
<dbReference type="Pfam" id="PF01047">
    <property type="entry name" value="MarR"/>
    <property type="match status" value="1"/>
</dbReference>
<dbReference type="PRINTS" id="PR00598">
    <property type="entry name" value="HTHMARR"/>
</dbReference>
<dbReference type="SMART" id="SM00347">
    <property type="entry name" value="HTH_MARR"/>
    <property type="match status" value="1"/>
</dbReference>
<dbReference type="SUPFAM" id="SSF46785">
    <property type="entry name" value="Winged helix' DNA-binding domain"/>
    <property type="match status" value="1"/>
</dbReference>
<dbReference type="PROSITE" id="PS01117">
    <property type="entry name" value="HTH_MARR_1"/>
    <property type="match status" value="1"/>
</dbReference>
<dbReference type="PROSITE" id="PS50995">
    <property type="entry name" value="HTH_MARR_2"/>
    <property type="match status" value="1"/>
</dbReference>
<protein>
    <recommendedName>
        <fullName>Uncharacterized HTH-type transcriptional regulator YxaD</fullName>
    </recommendedName>
</protein>
<name>YXAD_BACSU</name>
<keyword id="KW-0238">DNA-binding</keyword>
<keyword id="KW-1185">Reference proteome</keyword>
<keyword id="KW-0804">Transcription</keyword>
<keyword id="KW-0805">Transcription regulation</keyword>
<sequence>MQNQNPVELIEYELTTFIRRAVYLDQSEKRTGNLERSSYLLLRQLDEFGPARVKELAESFKLDISTLSRQAAALEAKELIYRFSDPSDGRVSLFTITKLGKQLLKADQQKRLERYEQMLKEWSTQEKEMFGELLQRMNKAFID</sequence>
<reference key="1">
    <citation type="journal article" date="1995" name="DNA Res.">
        <title>Cloning and sequencing of a 36-kb region of the Bacillus subtilis genome between the gnt and iol operons.</title>
        <authorList>
            <person name="Yoshida K."/>
            <person name="Seki S."/>
            <person name="Fujimura M."/>
            <person name="Miwa Y."/>
            <person name="Fujita Y."/>
        </authorList>
    </citation>
    <scope>NUCLEOTIDE SEQUENCE [GENOMIC DNA]</scope>
    <source>
        <strain>168 / BGSC1A1</strain>
    </source>
</reference>
<reference key="2">
    <citation type="journal article" date="1997" name="Nature">
        <title>The complete genome sequence of the Gram-positive bacterium Bacillus subtilis.</title>
        <authorList>
            <person name="Kunst F."/>
            <person name="Ogasawara N."/>
            <person name="Moszer I."/>
            <person name="Albertini A.M."/>
            <person name="Alloni G."/>
            <person name="Azevedo V."/>
            <person name="Bertero M.G."/>
            <person name="Bessieres P."/>
            <person name="Bolotin A."/>
            <person name="Borchert S."/>
            <person name="Borriss R."/>
            <person name="Boursier L."/>
            <person name="Brans A."/>
            <person name="Braun M."/>
            <person name="Brignell S.C."/>
            <person name="Bron S."/>
            <person name="Brouillet S."/>
            <person name="Bruschi C.V."/>
            <person name="Caldwell B."/>
            <person name="Capuano V."/>
            <person name="Carter N.M."/>
            <person name="Choi S.-K."/>
            <person name="Codani J.-J."/>
            <person name="Connerton I.F."/>
            <person name="Cummings N.J."/>
            <person name="Daniel R.A."/>
            <person name="Denizot F."/>
            <person name="Devine K.M."/>
            <person name="Duesterhoeft A."/>
            <person name="Ehrlich S.D."/>
            <person name="Emmerson P.T."/>
            <person name="Entian K.-D."/>
            <person name="Errington J."/>
            <person name="Fabret C."/>
            <person name="Ferrari E."/>
            <person name="Foulger D."/>
            <person name="Fritz C."/>
            <person name="Fujita M."/>
            <person name="Fujita Y."/>
            <person name="Fuma S."/>
            <person name="Galizzi A."/>
            <person name="Galleron N."/>
            <person name="Ghim S.-Y."/>
            <person name="Glaser P."/>
            <person name="Goffeau A."/>
            <person name="Golightly E.J."/>
            <person name="Grandi G."/>
            <person name="Guiseppi G."/>
            <person name="Guy B.J."/>
            <person name="Haga K."/>
            <person name="Haiech J."/>
            <person name="Harwood C.R."/>
            <person name="Henaut A."/>
            <person name="Hilbert H."/>
            <person name="Holsappel S."/>
            <person name="Hosono S."/>
            <person name="Hullo M.-F."/>
            <person name="Itaya M."/>
            <person name="Jones L.-M."/>
            <person name="Joris B."/>
            <person name="Karamata D."/>
            <person name="Kasahara Y."/>
            <person name="Klaerr-Blanchard M."/>
            <person name="Klein C."/>
            <person name="Kobayashi Y."/>
            <person name="Koetter P."/>
            <person name="Koningstein G."/>
            <person name="Krogh S."/>
            <person name="Kumano M."/>
            <person name="Kurita K."/>
            <person name="Lapidus A."/>
            <person name="Lardinois S."/>
            <person name="Lauber J."/>
            <person name="Lazarevic V."/>
            <person name="Lee S.-M."/>
            <person name="Levine A."/>
            <person name="Liu H."/>
            <person name="Masuda S."/>
            <person name="Mauel C."/>
            <person name="Medigue C."/>
            <person name="Medina N."/>
            <person name="Mellado R.P."/>
            <person name="Mizuno M."/>
            <person name="Moestl D."/>
            <person name="Nakai S."/>
            <person name="Noback M."/>
            <person name="Noone D."/>
            <person name="O'Reilly M."/>
            <person name="Ogawa K."/>
            <person name="Ogiwara A."/>
            <person name="Oudega B."/>
            <person name="Park S.-H."/>
            <person name="Parro V."/>
            <person name="Pohl T.M."/>
            <person name="Portetelle D."/>
            <person name="Porwollik S."/>
            <person name="Prescott A.M."/>
            <person name="Presecan E."/>
            <person name="Pujic P."/>
            <person name="Purnelle B."/>
            <person name="Rapoport G."/>
            <person name="Rey M."/>
            <person name="Reynolds S."/>
            <person name="Rieger M."/>
            <person name="Rivolta C."/>
            <person name="Rocha E."/>
            <person name="Roche B."/>
            <person name="Rose M."/>
            <person name="Sadaie Y."/>
            <person name="Sato T."/>
            <person name="Scanlan E."/>
            <person name="Schleich S."/>
            <person name="Schroeter R."/>
            <person name="Scoffone F."/>
            <person name="Sekiguchi J."/>
            <person name="Sekowska A."/>
            <person name="Seror S.J."/>
            <person name="Serror P."/>
            <person name="Shin B.-S."/>
            <person name="Soldo B."/>
            <person name="Sorokin A."/>
            <person name="Tacconi E."/>
            <person name="Takagi T."/>
            <person name="Takahashi H."/>
            <person name="Takemaru K."/>
            <person name="Takeuchi M."/>
            <person name="Tamakoshi A."/>
            <person name="Tanaka T."/>
            <person name="Terpstra P."/>
            <person name="Tognoni A."/>
            <person name="Tosato V."/>
            <person name="Uchiyama S."/>
            <person name="Vandenbol M."/>
            <person name="Vannier F."/>
            <person name="Vassarotti A."/>
            <person name="Viari A."/>
            <person name="Wambutt R."/>
            <person name="Wedler E."/>
            <person name="Wedler H."/>
            <person name="Weitzenegger T."/>
            <person name="Winters P."/>
            <person name="Wipat A."/>
            <person name="Yamamoto H."/>
            <person name="Yamane K."/>
            <person name="Yasumoto K."/>
            <person name="Yata K."/>
            <person name="Yoshida K."/>
            <person name="Yoshikawa H.-F."/>
            <person name="Zumstein E."/>
            <person name="Yoshikawa H."/>
            <person name="Danchin A."/>
        </authorList>
    </citation>
    <scope>NUCLEOTIDE SEQUENCE [LARGE SCALE GENOMIC DNA]</scope>
    <source>
        <strain>168</strain>
    </source>
</reference>
<evidence type="ECO:0000255" key="1">
    <source>
        <dbReference type="PROSITE-ProRule" id="PRU00345"/>
    </source>
</evidence>